<feature type="chain" id="PRO_0000083167" description="Penicillin-binding protein 1A">
    <location>
        <begin position="1"/>
        <end position="798"/>
    </location>
</feature>
<feature type="topological domain" description="Cytoplasmic" evidence="4">
    <location>
        <begin position="1"/>
        <end position="9"/>
    </location>
</feature>
<feature type="transmembrane region" description="Helical; Signal-anchor for type II membrane protein" evidence="4">
    <location>
        <begin position="10"/>
        <end position="30"/>
    </location>
</feature>
<feature type="topological domain" description="Periplasmic" evidence="4">
    <location>
        <begin position="31"/>
        <end position="798"/>
    </location>
</feature>
<feature type="region of interest" description="Transglycosylase">
    <location>
        <begin position="50"/>
        <end position="218"/>
    </location>
</feature>
<feature type="region of interest" description="Transpeptidase">
    <location>
        <begin position="413"/>
        <end position="699"/>
    </location>
</feature>
<feature type="region of interest" description="Disordered" evidence="5">
    <location>
        <begin position="734"/>
        <end position="798"/>
    </location>
</feature>
<feature type="compositionally biased region" description="Polar residues" evidence="5">
    <location>
        <begin position="782"/>
        <end position="798"/>
    </location>
</feature>
<feature type="active site" description="Proton donor; for transglycosylase activity" evidence="3">
    <location>
        <position position="88"/>
    </location>
</feature>
<feature type="active site" description="Acyl-ester intermediate; for transpeptidase activity" evidence="3">
    <location>
        <position position="460"/>
    </location>
</feature>
<gene>
    <name type="primary">mrcA</name>
    <name type="synonym">ponA</name>
</gene>
<sequence length="798" mass="87704">MIKKIITTCMGLNNGLALFGVGLIAIAILVTYPKLPSLDSLQHYKPKLPLTIYSSDGQVIGVYGEQRREFTKIDDFPKILKDAVIAAEDKRFYDHWGVDVWGVARAVIGNVMAGGVQSGASTITQQVAKNFYLSSERSFTRKFNEALLAYKIEQSLSKDKILELYFNQIYLGQRAYGFASAAQTYFNKNVNDLTLAEAAMLAGLPKAPSAYNPIVNPERAKLRQAYILNNMLEEGMITLQQRDQALKEELHYERFVQNIDQSALYVAEMARQELFEKYGEDAYTQGFKVYTTVDTAHQRVATEALRKVLRNFDRGSSYRGAENYIDLSKSDNVEETVSQYLSTLYTVDKMIPAVVLEASRKGVQIQLPSGRKVTLNNHALGFAARAVNNEKMGDDRIRRGSVIRVKGSGDTFTVVQEPLLQGALVSLDAKTGAVRALVGGYDYHSKTFNRATQAMRQPGSTFKPFIYSAALAKGMTASTMINDAPISLPGKGANGKAWNPKNSDGRYAGYITLRQALTASKNMVSIRILMSIGIGYAQQYIQRFGFKPSEIPASLSMALGAGETTPLRIAEGYSVFANGGYKVSAHVIDKIYDSQGRLRAQMQPLVAGENAPQAIDPRNAYIMYKIMQDVVRVGTARGAATLGRSDIAGKTGTTNDNKDAWFVGFNPNVVTAVYIGFDKPRSMGRAGYGGTIAVPVWVEYIGFALKGTSVKPMKAPEGVVTNGGEVYMRERMTTSSDLALDNSGIRPRPTQPARRAVPNENRRRAESNTAPAREESDETPVLPSNTGNNNRQQLDSLF</sequence>
<name>PBPA_NEIFL</name>
<proteinExistence type="inferred from homology"/>
<protein>
    <recommendedName>
        <fullName>Penicillin-binding protein 1A</fullName>
        <shortName>PBP-1a</shortName>
        <shortName>PBP1a</shortName>
    </recommendedName>
    <domain>
        <recommendedName>
            <fullName>Penicillin-insensitive transglycosylase</fullName>
            <ecNumber evidence="2">2.4.99.28</ecNumber>
        </recommendedName>
        <alternativeName>
            <fullName>Peptidoglycan TGase</fullName>
        </alternativeName>
    </domain>
    <domain>
        <recommendedName>
            <fullName>Penicillin-sensitive transpeptidase</fullName>
            <ecNumber evidence="2">3.4.16.4</ecNumber>
        </recommendedName>
        <alternativeName>
            <fullName>DD-transpeptidase</fullName>
        </alternativeName>
    </domain>
</protein>
<accession>O87626</accession>
<keyword id="KW-0046">Antibiotic resistance</keyword>
<keyword id="KW-0121">Carboxypeptidase</keyword>
<keyword id="KW-0997">Cell inner membrane</keyword>
<keyword id="KW-1003">Cell membrane</keyword>
<keyword id="KW-0133">Cell shape</keyword>
<keyword id="KW-0961">Cell wall biogenesis/degradation</keyword>
<keyword id="KW-0328">Glycosyltransferase</keyword>
<keyword id="KW-0378">Hydrolase</keyword>
<keyword id="KW-0472">Membrane</keyword>
<keyword id="KW-0511">Multifunctional enzyme</keyword>
<keyword id="KW-0573">Peptidoglycan synthesis</keyword>
<keyword id="KW-0645">Protease</keyword>
<keyword id="KW-0735">Signal-anchor</keyword>
<keyword id="KW-0808">Transferase</keyword>
<keyword id="KW-0812">Transmembrane</keyword>
<keyword id="KW-1133">Transmembrane helix</keyword>
<dbReference type="EC" id="2.4.99.28" evidence="2"/>
<dbReference type="EC" id="3.4.16.4" evidence="2"/>
<dbReference type="EMBL" id="AF087677">
    <property type="protein sequence ID" value="AAC35856.1"/>
    <property type="molecule type" value="Genomic_DNA"/>
</dbReference>
<dbReference type="SMR" id="O87626"/>
<dbReference type="STRING" id="484.TW91_0402"/>
<dbReference type="CAZy" id="GT51">
    <property type="family name" value="Glycosyltransferase Family 51"/>
</dbReference>
<dbReference type="UniPathway" id="UPA00219"/>
<dbReference type="GO" id="GO:0030288">
    <property type="term" value="C:outer membrane-bounded periplasmic space"/>
    <property type="evidence" value="ECO:0007669"/>
    <property type="project" value="TreeGrafter"/>
</dbReference>
<dbReference type="GO" id="GO:0005886">
    <property type="term" value="C:plasma membrane"/>
    <property type="evidence" value="ECO:0007669"/>
    <property type="project" value="UniProtKB-SubCell"/>
</dbReference>
<dbReference type="GO" id="GO:0008658">
    <property type="term" value="F:penicillin binding"/>
    <property type="evidence" value="ECO:0007669"/>
    <property type="project" value="InterPro"/>
</dbReference>
<dbReference type="GO" id="GO:0008955">
    <property type="term" value="F:peptidoglycan glycosyltransferase activity"/>
    <property type="evidence" value="ECO:0007669"/>
    <property type="project" value="RHEA"/>
</dbReference>
<dbReference type="GO" id="GO:0009002">
    <property type="term" value="F:serine-type D-Ala-D-Ala carboxypeptidase activity"/>
    <property type="evidence" value="ECO:0007669"/>
    <property type="project" value="UniProtKB-EC"/>
</dbReference>
<dbReference type="GO" id="GO:0071555">
    <property type="term" value="P:cell wall organization"/>
    <property type="evidence" value="ECO:0007669"/>
    <property type="project" value="UniProtKB-KW"/>
</dbReference>
<dbReference type="GO" id="GO:0009252">
    <property type="term" value="P:peptidoglycan biosynthetic process"/>
    <property type="evidence" value="ECO:0007669"/>
    <property type="project" value="UniProtKB-UniPathway"/>
</dbReference>
<dbReference type="GO" id="GO:0006508">
    <property type="term" value="P:proteolysis"/>
    <property type="evidence" value="ECO:0007669"/>
    <property type="project" value="UniProtKB-KW"/>
</dbReference>
<dbReference type="GO" id="GO:0008360">
    <property type="term" value="P:regulation of cell shape"/>
    <property type="evidence" value="ECO:0007669"/>
    <property type="project" value="UniProtKB-KW"/>
</dbReference>
<dbReference type="GO" id="GO:0046677">
    <property type="term" value="P:response to antibiotic"/>
    <property type="evidence" value="ECO:0007669"/>
    <property type="project" value="UniProtKB-KW"/>
</dbReference>
<dbReference type="FunFam" id="3.40.710.10:FF:000041">
    <property type="entry name" value="Penicillin-binding protein 1A"/>
    <property type="match status" value="1"/>
</dbReference>
<dbReference type="FunFam" id="1.10.3810.10:FF:000003">
    <property type="entry name" value="Penicillin-binding protein 1a"/>
    <property type="match status" value="1"/>
</dbReference>
<dbReference type="Gene3D" id="1.10.3810.10">
    <property type="entry name" value="Biosynthetic peptidoglycan transglycosylase-like"/>
    <property type="match status" value="1"/>
</dbReference>
<dbReference type="Gene3D" id="3.40.710.10">
    <property type="entry name" value="DD-peptidase/beta-lactamase superfamily"/>
    <property type="match status" value="2"/>
</dbReference>
<dbReference type="Gene3D" id="2.40.50.140">
    <property type="entry name" value="Nucleic acid-binding proteins"/>
    <property type="match status" value="1"/>
</dbReference>
<dbReference type="InterPro" id="IPR012338">
    <property type="entry name" value="Beta-lactam/transpept-like"/>
</dbReference>
<dbReference type="InterPro" id="IPR001264">
    <property type="entry name" value="Glyco_trans_51"/>
</dbReference>
<dbReference type="InterPro" id="IPR050396">
    <property type="entry name" value="Glycosyltr_51/Transpeptidase"/>
</dbReference>
<dbReference type="InterPro" id="IPR023346">
    <property type="entry name" value="Lysozyme-like_dom_sf"/>
</dbReference>
<dbReference type="InterPro" id="IPR012340">
    <property type="entry name" value="NA-bd_OB-fold"/>
</dbReference>
<dbReference type="InterPro" id="IPR036950">
    <property type="entry name" value="PBP_transglycosylase"/>
</dbReference>
<dbReference type="InterPro" id="IPR031376">
    <property type="entry name" value="PCB_OB"/>
</dbReference>
<dbReference type="InterPro" id="IPR001460">
    <property type="entry name" value="PCN-bd_Tpept"/>
</dbReference>
<dbReference type="NCBIfam" id="TIGR02074">
    <property type="entry name" value="PBP_1a_fam"/>
    <property type="match status" value="1"/>
</dbReference>
<dbReference type="PANTHER" id="PTHR32282">
    <property type="entry name" value="BINDING PROTEIN TRANSPEPTIDASE, PUTATIVE-RELATED"/>
    <property type="match status" value="1"/>
</dbReference>
<dbReference type="PANTHER" id="PTHR32282:SF27">
    <property type="entry name" value="PENICILLIN-BINDING PROTEIN 1A"/>
    <property type="match status" value="1"/>
</dbReference>
<dbReference type="Pfam" id="PF17092">
    <property type="entry name" value="PCB_OB"/>
    <property type="match status" value="1"/>
</dbReference>
<dbReference type="Pfam" id="PF00912">
    <property type="entry name" value="Transgly"/>
    <property type="match status" value="1"/>
</dbReference>
<dbReference type="Pfam" id="PF00905">
    <property type="entry name" value="Transpeptidase"/>
    <property type="match status" value="1"/>
</dbReference>
<dbReference type="SUPFAM" id="SSF56601">
    <property type="entry name" value="beta-lactamase/transpeptidase-like"/>
    <property type="match status" value="1"/>
</dbReference>
<dbReference type="SUPFAM" id="SSF53955">
    <property type="entry name" value="Lysozyme-like"/>
    <property type="match status" value="1"/>
</dbReference>
<comment type="function">
    <text evidence="1">Cell wall formation. Synthesis of cross-linked peptidoglycan from the lipid intermediates. The enzyme has a penicillin-insensitive transglycosylase N-terminal domain (formation of linear glycan strands) and a penicillin-sensitive transpeptidase C-terminal domain (cross-linking of the peptide subunits).</text>
</comment>
<comment type="catalytic activity">
    <reaction evidence="2">
        <text>[GlcNAc-(1-&gt;4)-Mur2Ac(oyl-L-Ala-gamma-D-Glu-L-Lys-D-Ala-D-Ala)](n)-di-trans,octa-cis-undecaprenyl diphosphate + beta-D-GlcNAc-(1-&gt;4)-Mur2Ac(oyl-L-Ala-gamma-D-Glu-L-Lys-D-Ala-D-Ala)-di-trans,octa-cis-undecaprenyl diphosphate = [GlcNAc-(1-&gt;4)-Mur2Ac(oyl-L-Ala-gamma-D-Glu-L-Lys-D-Ala-D-Ala)](n+1)-di-trans,octa-cis-undecaprenyl diphosphate + di-trans,octa-cis-undecaprenyl diphosphate + H(+)</text>
        <dbReference type="Rhea" id="RHEA:23708"/>
        <dbReference type="Rhea" id="RHEA-COMP:9602"/>
        <dbReference type="Rhea" id="RHEA-COMP:9603"/>
        <dbReference type="ChEBI" id="CHEBI:15378"/>
        <dbReference type="ChEBI" id="CHEBI:58405"/>
        <dbReference type="ChEBI" id="CHEBI:60033"/>
        <dbReference type="ChEBI" id="CHEBI:78435"/>
        <dbReference type="EC" id="2.4.99.28"/>
    </reaction>
</comment>
<comment type="catalytic activity">
    <reaction evidence="2">
        <text>Preferential cleavage: (Ac)2-L-Lys-D-Ala-|-D-Ala. Also transpeptidation of peptidyl-alanyl moieties that are N-acyl substituents of D-alanine.</text>
        <dbReference type="EC" id="3.4.16.4"/>
    </reaction>
</comment>
<comment type="pathway">
    <text>Cell wall biogenesis; peptidoglycan biosynthesis.</text>
</comment>
<comment type="subcellular location">
    <subcellularLocation>
        <location evidence="1">Cell inner membrane</location>
        <topology evidence="1">Single-pass type II membrane protein</topology>
    </subcellularLocation>
</comment>
<comment type="similarity">
    <text evidence="6">In the N-terminal section; belongs to the glycosyltransferase 51 family.</text>
</comment>
<comment type="similarity">
    <text evidence="6">In the C-terminal section; belongs to the transpeptidase family.</text>
</comment>
<evidence type="ECO:0000250" key="1"/>
<evidence type="ECO:0000250" key="2">
    <source>
        <dbReference type="UniProtKB" id="P02918"/>
    </source>
</evidence>
<evidence type="ECO:0000250" key="3">
    <source>
        <dbReference type="UniProtKB" id="P02919"/>
    </source>
</evidence>
<evidence type="ECO:0000255" key="4"/>
<evidence type="ECO:0000256" key="5">
    <source>
        <dbReference type="SAM" id="MobiDB-lite"/>
    </source>
</evidence>
<evidence type="ECO:0000305" key="6"/>
<organism>
    <name type="scientific">Neisseria flavescens</name>
    <dbReference type="NCBI Taxonomy" id="484"/>
    <lineage>
        <taxon>Bacteria</taxon>
        <taxon>Pseudomonadati</taxon>
        <taxon>Pseudomonadota</taxon>
        <taxon>Betaproteobacteria</taxon>
        <taxon>Neisseriales</taxon>
        <taxon>Neisseriaceae</taxon>
        <taxon>Neisseria</taxon>
    </lineage>
</organism>
<reference key="1">
    <citation type="submission" date="1998-08" db="EMBL/GenBank/DDBJ databases">
        <title>Nucleotide sequence of the ponA gene encoding penicillin-binding protein 1 of Neisseria flavescens.</title>
        <authorList>
            <person name="Ropp P.A."/>
            <person name="Nicholas R.A."/>
        </authorList>
    </citation>
    <scope>NUCLEOTIDE SEQUENCE [GENOMIC DNA]</scope>
    <source>
        <strain>ATCC 13120 / DSM 17633 / CCUG 345 / CIP 73.15 / LMG 5297 / NCTC 8263 / NRL 30009 / N155</strain>
    </source>
</reference>